<feature type="chain" id="PRO_0000114232" description="Chromosomal replication initiator protein DnaA">
    <location>
        <begin position="1"/>
        <end position="500"/>
    </location>
</feature>
<feature type="region of interest" description="Domain I, interacts with DnaA modulators" evidence="1">
    <location>
        <begin position="1"/>
        <end position="103"/>
    </location>
</feature>
<feature type="region of interest" description="Disordered" evidence="2">
    <location>
        <begin position="1"/>
        <end position="37"/>
    </location>
</feature>
<feature type="region of interest" description="Domain II" evidence="1">
    <location>
        <begin position="103"/>
        <end position="161"/>
    </location>
</feature>
<feature type="region of interest" description="Domain III, AAA+ region" evidence="1">
    <location>
        <begin position="162"/>
        <end position="378"/>
    </location>
</feature>
<feature type="region of interest" description="Domain IV, binds dsDNA" evidence="1">
    <location>
        <begin position="379"/>
        <end position="500"/>
    </location>
</feature>
<feature type="compositionally biased region" description="Pro residues" evidence="2">
    <location>
        <begin position="14"/>
        <end position="27"/>
    </location>
</feature>
<feature type="binding site" evidence="1">
    <location>
        <position position="206"/>
    </location>
    <ligand>
        <name>ATP</name>
        <dbReference type="ChEBI" id="CHEBI:30616"/>
    </ligand>
</feature>
<feature type="binding site" evidence="1">
    <location>
        <position position="208"/>
    </location>
    <ligand>
        <name>ATP</name>
        <dbReference type="ChEBI" id="CHEBI:30616"/>
    </ligand>
</feature>
<feature type="binding site" evidence="1">
    <location>
        <position position="209"/>
    </location>
    <ligand>
        <name>ATP</name>
        <dbReference type="ChEBI" id="CHEBI:30616"/>
    </ligand>
</feature>
<feature type="binding site" evidence="1">
    <location>
        <position position="210"/>
    </location>
    <ligand>
        <name>ATP</name>
        <dbReference type="ChEBI" id="CHEBI:30616"/>
    </ligand>
</feature>
<sequence length="500" mass="56018">MSDTPFGDADHPRPAPIHPDAVLPPPMSSQSADNDPTEALNEAWTNILTKVSKPNRAWLSNTTPVTMHSSTAMVAVPNEFARDRLESKMRYELEELLSDHFHKAIHLAITIDPDLELALGAPDHEDEEEEVPPAQFVPKVTVGVTEPSARPTTTIDDDEGNRLNPKYTFDSFVIGASNRFAHAAAVAVAEAPGKSYNPLLIYGGSGLGKTHLLHAIGRYVMSYYDNVKVKYVSTEELTNDFINAIGTNRTTEFRRSYRDVDVLLVDDIQFLQSKIQTQEEFFHTFNTLHNAQKQIVMTSDRPPKLLEALEPRLRSRFEWGLLTDIQPPDLETRIAILRRKVAAEKITVEPDVLEFIASRIQTNIRELEGALIRVTAFASLNQQPVDISLAEVVLKDLIPEGRETPVTPERIIAETADYFDISADDLLGTSRAQTLVTARQIAMYLCRELTDLSLPKIGAEFGGKDHTTVMHADRKIRALMGEQRQIFNQVSEITNRIKQY</sequence>
<proteinExistence type="inferred from homology"/>
<evidence type="ECO:0000255" key="1">
    <source>
        <dbReference type="HAMAP-Rule" id="MF_00377"/>
    </source>
</evidence>
<evidence type="ECO:0000256" key="2">
    <source>
        <dbReference type="SAM" id="MobiDB-lite"/>
    </source>
</evidence>
<organism>
    <name type="scientific">Cutibacterium acnes (strain DSM 16379 / KPA171202)</name>
    <name type="common">Propionibacterium acnes</name>
    <dbReference type="NCBI Taxonomy" id="267747"/>
    <lineage>
        <taxon>Bacteria</taxon>
        <taxon>Bacillati</taxon>
        <taxon>Actinomycetota</taxon>
        <taxon>Actinomycetes</taxon>
        <taxon>Propionibacteriales</taxon>
        <taxon>Propionibacteriaceae</taxon>
        <taxon>Cutibacterium</taxon>
    </lineage>
</organism>
<gene>
    <name evidence="1" type="primary">dnaA</name>
    <name type="ordered locus">PPA0001</name>
</gene>
<accession>Q6ABL5</accession>
<reference key="1">
    <citation type="journal article" date="2004" name="Science">
        <title>The complete genome sequence of Propionibacterium acnes, a commensal of human skin.</title>
        <authorList>
            <person name="Brueggemann H."/>
            <person name="Henne A."/>
            <person name="Hoster F."/>
            <person name="Liesegang H."/>
            <person name="Wiezer A."/>
            <person name="Strittmatter A."/>
            <person name="Hujer S."/>
            <person name="Duerre P."/>
            <person name="Gottschalk G."/>
        </authorList>
    </citation>
    <scope>NUCLEOTIDE SEQUENCE [LARGE SCALE GENOMIC DNA]</scope>
    <source>
        <strain>DSM 16379 / KPA171202</strain>
    </source>
</reference>
<comment type="function">
    <text evidence="1">Plays an essential role in the initiation and regulation of chromosomal replication. ATP-DnaA binds to the origin of replication (oriC) to initiate formation of the DNA replication initiation complex once per cell cycle. Binds the DnaA box (a 9 base pair repeat at the origin) and separates the double-stranded (ds)DNA. Forms a right-handed helical filament on oriC DNA; dsDNA binds to the exterior of the filament while single-stranded (ss)DNA is stabiized in the filament's interior. The ATP-DnaA-oriC complex binds and stabilizes one strand of the AT-rich DNA unwinding element (DUE), permitting loading of DNA polymerase. After initiation quickly degrades to an ADP-DnaA complex that is not apt for DNA replication. Binds acidic phospholipids.</text>
</comment>
<comment type="subunit">
    <text evidence="1">Oligomerizes as a right-handed, spiral filament on DNA at oriC.</text>
</comment>
<comment type="subcellular location">
    <subcellularLocation>
        <location evidence="1">Cytoplasm</location>
    </subcellularLocation>
</comment>
<comment type="domain">
    <text evidence="1">Domain I is involved in oligomerization and binding regulators, domain II is flexibile and of varying length in different bacteria, domain III forms the AAA+ region, while domain IV binds dsDNA.</text>
</comment>
<comment type="similarity">
    <text evidence="1">Belongs to the DnaA family.</text>
</comment>
<protein>
    <recommendedName>
        <fullName evidence="1">Chromosomal replication initiator protein DnaA</fullName>
    </recommendedName>
</protein>
<keyword id="KW-0067">ATP-binding</keyword>
<keyword id="KW-0963">Cytoplasm</keyword>
<keyword id="KW-0235">DNA replication</keyword>
<keyword id="KW-0238">DNA-binding</keyword>
<keyword id="KW-0446">Lipid-binding</keyword>
<keyword id="KW-0547">Nucleotide-binding</keyword>
<name>DNAA_CUTAK</name>
<dbReference type="EMBL" id="AE017283">
    <property type="protein sequence ID" value="AAT81766.1"/>
    <property type="molecule type" value="Genomic_DNA"/>
</dbReference>
<dbReference type="RefSeq" id="WP_002515747.1">
    <property type="nucleotide sequence ID" value="NZ_CP025935.1"/>
</dbReference>
<dbReference type="SMR" id="Q6ABL5"/>
<dbReference type="EnsemblBacteria" id="AAT81766">
    <property type="protein sequence ID" value="AAT81766"/>
    <property type="gene ID" value="PPA0001"/>
</dbReference>
<dbReference type="GeneID" id="92855989"/>
<dbReference type="KEGG" id="pac:PPA0001"/>
<dbReference type="eggNOG" id="COG0593">
    <property type="taxonomic scope" value="Bacteria"/>
</dbReference>
<dbReference type="HOGENOM" id="CLU_026910_2_0_11"/>
<dbReference type="Proteomes" id="UP000000603">
    <property type="component" value="Chromosome"/>
</dbReference>
<dbReference type="GO" id="GO:0005737">
    <property type="term" value="C:cytoplasm"/>
    <property type="evidence" value="ECO:0007669"/>
    <property type="project" value="UniProtKB-SubCell"/>
</dbReference>
<dbReference type="GO" id="GO:0005886">
    <property type="term" value="C:plasma membrane"/>
    <property type="evidence" value="ECO:0007669"/>
    <property type="project" value="TreeGrafter"/>
</dbReference>
<dbReference type="GO" id="GO:0005524">
    <property type="term" value="F:ATP binding"/>
    <property type="evidence" value="ECO:0007669"/>
    <property type="project" value="UniProtKB-UniRule"/>
</dbReference>
<dbReference type="GO" id="GO:0016887">
    <property type="term" value="F:ATP hydrolysis activity"/>
    <property type="evidence" value="ECO:0007669"/>
    <property type="project" value="InterPro"/>
</dbReference>
<dbReference type="GO" id="GO:0003688">
    <property type="term" value="F:DNA replication origin binding"/>
    <property type="evidence" value="ECO:0007669"/>
    <property type="project" value="UniProtKB-UniRule"/>
</dbReference>
<dbReference type="GO" id="GO:0008289">
    <property type="term" value="F:lipid binding"/>
    <property type="evidence" value="ECO:0007669"/>
    <property type="project" value="UniProtKB-KW"/>
</dbReference>
<dbReference type="GO" id="GO:0006270">
    <property type="term" value="P:DNA replication initiation"/>
    <property type="evidence" value="ECO:0007669"/>
    <property type="project" value="UniProtKB-UniRule"/>
</dbReference>
<dbReference type="GO" id="GO:0006275">
    <property type="term" value="P:regulation of DNA replication"/>
    <property type="evidence" value="ECO:0007669"/>
    <property type="project" value="UniProtKB-UniRule"/>
</dbReference>
<dbReference type="CDD" id="cd00009">
    <property type="entry name" value="AAA"/>
    <property type="match status" value="1"/>
</dbReference>
<dbReference type="CDD" id="cd06571">
    <property type="entry name" value="Bac_DnaA_C"/>
    <property type="match status" value="1"/>
</dbReference>
<dbReference type="FunFam" id="1.10.1750.10:FF:000002">
    <property type="entry name" value="Chromosomal replication initiator protein DnaA"/>
    <property type="match status" value="1"/>
</dbReference>
<dbReference type="FunFam" id="1.10.8.60:FF:000003">
    <property type="entry name" value="Chromosomal replication initiator protein DnaA"/>
    <property type="match status" value="1"/>
</dbReference>
<dbReference type="FunFam" id="3.40.50.300:FF:000150">
    <property type="entry name" value="Chromosomal replication initiator protein DnaA"/>
    <property type="match status" value="1"/>
</dbReference>
<dbReference type="Gene3D" id="1.10.1750.10">
    <property type="match status" value="1"/>
</dbReference>
<dbReference type="Gene3D" id="1.10.8.60">
    <property type="match status" value="1"/>
</dbReference>
<dbReference type="Gene3D" id="3.30.300.180">
    <property type="match status" value="1"/>
</dbReference>
<dbReference type="Gene3D" id="3.40.50.300">
    <property type="entry name" value="P-loop containing nucleotide triphosphate hydrolases"/>
    <property type="match status" value="1"/>
</dbReference>
<dbReference type="HAMAP" id="MF_00377">
    <property type="entry name" value="DnaA_bact"/>
    <property type="match status" value="1"/>
</dbReference>
<dbReference type="InterPro" id="IPR003593">
    <property type="entry name" value="AAA+_ATPase"/>
</dbReference>
<dbReference type="InterPro" id="IPR001957">
    <property type="entry name" value="Chromosome_initiator_DnaA"/>
</dbReference>
<dbReference type="InterPro" id="IPR020591">
    <property type="entry name" value="Chromosome_initiator_DnaA-like"/>
</dbReference>
<dbReference type="InterPro" id="IPR018312">
    <property type="entry name" value="Chromosome_initiator_DnaA_CS"/>
</dbReference>
<dbReference type="InterPro" id="IPR013159">
    <property type="entry name" value="DnaA_C"/>
</dbReference>
<dbReference type="InterPro" id="IPR013317">
    <property type="entry name" value="DnaA_dom"/>
</dbReference>
<dbReference type="InterPro" id="IPR038454">
    <property type="entry name" value="DnaA_N_sf"/>
</dbReference>
<dbReference type="InterPro" id="IPR027417">
    <property type="entry name" value="P-loop_NTPase"/>
</dbReference>
<dbReference type="InterPro" id="IPR010921">
    <property type="entry name" value="Trp_repressor/repl_initiator"/>
</dbReference>
<dbReference type="NCBIfam" id="TIGR00362">
    <property type="entry name" value="DnaA"/>
    <property type="match status" value="1"/>
</dbReference>
<dbReference type="NCBIfam" id="NF010686">
    <property type="entry name" value="PRK14086.1"/>
    <property type="match status" value="1"/>
</dbReference>
<dbReference type="PANTHER" id="PTHR30050">
    <property type="entry name" value="CHROMOSOMAL REPLICATION INITIATOR PROTEIN DNAA"/>
    <property type="match status" value="1"/>
</dbReference>
<dbReference type="PANTHER" id="PTHR30050:SF2">
    <property type="entry name" value="CHROMOSOMAL REPLICATION INITIATOR PROTEIN DNAA"/>
    <property type="match status" value="1"/>
</dbReference>
<dbReference type="Pfam" id="PF00308">
    <property type="entry name" value="Bac_DnaA"/>
    <property type="match status" value="1"/>
</dbReference>
<dbReference type="Pfam" id="PF08299">
    <property type="entry name" value="Bac_DnaA_C"/>
    <property type="match status" value="1"/>
</dbReference>
<dbReference type="PRINTS" id="PR00051">
    <property type="entry name" value="DNAA"/>
</dbReference>
<dbReference type="SMART" id="SM00382">
    <property type="entry name" value="AAA"/>
    <property type="match status" value="1"/>
</dbReference>
<dbReference type="SMART" id="SM00760">
    <property type="entry name" value="Bac_DnaA_C"/>
    <property type="match status" value="1"/>
</dbReference>
<dbReference type="SUPFAM" id="SSF52540">
    <property type="entry name" value="P-loop containing nucleoside triphosphate hydrolases"/>
    <property type="match status" value="1"/>
</dbReference>
<dbReference type="SUPFAM" id="SSF48295">
    <property type="entry name" value="TrpR-like"/>
    <property type="match status" value="1"/>
</dbReference>
<dbReference type="PROSITE" id="PS01008">
    <property type="entry name" value="DNAA"/>
    <property type="match status" value="1"/>
</dbReference>